<accession>B9L8R5</accession>
<gene>
    <name evidence="1" type="primary">clpS</name>
    <name type="ordered locus">NAMH_0607</name>
</gene>
<feature type="chain" id="PRO_1000132813" description="ATP-dependent Clp protease adapter protein ClpS">
    <location>
        <begin position="1"/>
        <end position="97"/>
    </location>
</feature>
<protein>
    <recommendedName>
        <fullName evidence="1">ATP-dependent Clp protease adapter protein ClpS</fullName>
    </recommendedName>
</protein>
<evidence type="ECO:0000255" key="1">
    <source>
        <dbReference type="HAMAP-Rule" id="MF_00302"/>
    </source>
</evidence>
<dbReference type="EMBL" id="CP001279">
    <property type="protein sequence ID" value="ACM92912.1"/>
    <property type="molecule type" value="Genomic_DNA"/>
</dbReference>
<dbReference type="RefSeq" id="WP_015901964.1">
    <property type="nucleotide sequence ID" value="NC_012115.1"/>
</dbReference>
<dbReference type="SMR" id="B9L8R5"/>
<dbReference type="STRING" id="598659.NAMH_0607"/>
<dbReference type="KEGG" id="nam:NAMH_0607"/>
<dbReference type="eggNOG" id="COG2127">
    <property type="taxonomic scope" value="Bacteria"/>
</dbReference>
<dbReference type="HOGENOM" id="CLU_134358_1_0_7"/>
<dbReference type="OrthoDB" id="9796121at2"/>
<dbReference type="Proteomes" id="UP000000448">
    <property type="component" value="Chromosome"/>
</dbReference>
<dbReference type="GO" id="GO:0030163">
    <property type="term" value="P:protein catabolic process"/>
    <property type="evidence" value="ECO:0007669"/>
    <property type="project" value="InterPro"/>
</dbReference>
<dbReference type="GO" id="GO:0006508">
    <property type="term" value="P:proteolysis"/>
    <property type="evidence" value="ECO:0007669"/>
    <property type="project" value="UniProtKB-UniRule"/>
</dbReference>
<dbReference type="Gene3D" id="3.30.1390.10">
    <property type="match status" value="1"/>
</dbReference>
<dbReference type="HAMAP" id="MF_00302">
    <property type="entry name" value="ClpS"/>
    <property type="match status" value="1"/>
</dbReference>
<dbReference type="InterPro" id="IPR022935">
    <property type="entry name" value="ClpS"/>
</dbReference>
<dbReference type="InterPro" id="IPR003769">
    <property type="entry name" value="ClpS_core"/>
</dbReference>
<dbReference type="InterPro" id="IPR014719">
    <property type="entry name" value="Ribosomal_bL12_C/ClpS-like"/>
</dbReference>
<dbReference type="PANTHER" id="PTHR33473:SF19">
    <property type="entry name" value="ATP-DEPENDENT CLP PROTEASE ADAPTER PROTEIN CLPS"/>
    <property type="match status" value="1"/>
</dbReference>
<dbReference type="PANTHER" id="PTHR33473">
    <property type="entry name" value="ATP-DEPENDENT CLP PROTEASE ADAPTER PROTEIN CLPS1, CHLOROPLASTIC"/>
    <property type="match status" value="1"/>
</dbReference>
<dbReference type="Pfam" id="PF02617">
    <property type="entry name" value="ClpS"/>
    <property type="match status" value="1"/>
</dbReference>
<dbReference type="SUPFAM" id="SSF54736">
    <property type="entry name" value="ClpS-like"/>
    <property type="match status" value="1"/>
</dbReference>
<comment type="function">
    <text evidence="1">Involved in the modulation of the specificity of the ClpAP-mediated ATP-dependent protein degradation.</text>
</comment>
<comment type="subunit">
    <text evidence="1">Binds to the N-terminal domain of the chaperone ClpA.</text>
</comment>
<comment type="similarity">
    <text evidence="1">Belongs to the ClpS family.</text>
</comment>
<sequence>MPTKTVVENDVEIIMPKLYKVMLLNDDYTTFDFVIEILKTVFHKNEEEAINITLKVDREGSAAVGVYPYEIAQVKIEKTHTLARQAGYPLRAVMEEV</sequence>
<organism>
    <name type="scientific">Nautilia profundicola (strain ATCC BAA-1463 / DSM 18972 / AmH)</name>
    <dbReference type="NCBI Taxonomy" id="598659"/>
    <lineage>
        <taxon>Bacteria</taxon>
        <taxon>Pseudomonadati</taxon>
        <taxon>Campylobacterota</taxon>
        <taxon>Epsilonproteobacteria</taxon>
        <taxon>Nautiliales</taxon>
        <taxon>Nautiliaceae</taxon>
        <taxon>Nautilia</taxon>
    </lineage>
</organism>
<proteinExistence type="inferred from homology"/>
<name>CLPS_NAUPA</name>
<reference key="1">
    <citation type="journal article" date="2009" name="PLoS Genet.">
        <title>Adaptations to submarine hydrothermal environments exemplified by the genome of Nautilia profundicola.</title>
        <authorList>
            <person name="Campbell B.J."/>
            <person name="Smith J.L."/>
            <person name="Hanson T.E."/>
            <person name="Klotz M.G."/>
            <person name="Stein L.Y."/>
            <person name="Lee C.K."/>
            <person name="Wu D."/>
            <person name="Robinson J.M."/>
            <person name="Khouri H.M."/>
            <person name="Eisen J.A."/>
            <person name="Cary S.C."/>
        </authorList>
    </citation>
    <scope>NUCLEOTIDE SEQUENCE [LARGE SCALE GENOMIC DNA]</scope>
    <source>
        <strain>ATCC BAA-1463 / DSM 18972 / AmH</strain>
    </source>
</reference>